<keyword id="KW-0067">ATP-binding</keyword>
<keyword id="KW-0129">CBS domain</keyword>
<keyword id="KW-0903">Direct protein sequencing</keyword>
<keyword id="KW-0275">Fatty acid biosynthesis</keyword>
<keyword id="KW-0276">Fatty acid metabolism</keyword>
<keyword id="KW-0325">Glycoprotein</keyword>
<keyword id="KW-0444">Lipid biosynthesis</keyword>
<keyword id="KW-0443">Lipid metabolism</keyword>
<keyword id="KW-0547">Nucleotide-binding</keyword>
<keyword id="KW-0597">Phosphoprotein</keyword>
<keyword id="KW-1185">Reference proteome</keyword>
<keyword id="KW-0677">Repeat</keyword>
<feature type="chain" id="PRO_0000204379" description="5'-AMP-activated protein kinase subunit gamma-1">
    <location>
        <begin position="1"/>
        <end position="330"/>
    </location>
</feature>
<feature type="domain" description="CBS 1" evidence="4">
    <location>
        <begin position="43"/>
        <end position="103"/>
    </location>
</feature>
<feature type="domain" description="CBS 2" evidence="4">
    <location>
        <begin position="125"/>
        <end position="187"/>
    </location>
</feature>
<feature type="domain" description="CBS 3" evidence="4">
    <location>
        <begin position="198"/>
        <end position="260"/>
    </location>
</feature>
<feature type="domain" description="CBS 4" evidence="4">
    <location>
        <begin position="272"/>
        <end position="329"/>
    </location>
</feature>
<feature type="region of interest" description="Disordered" evidence="5">
    <location>
        <begin position="1"/>
        <end position="26"/>
    </location>
</feature>
<feature type="short sequence motif" description="AMPK pseudosubstrate">
    <location>
        <begin position="138"/>
        <end position="159"/>
    </location>
</feature>
<feature type="compositionally biased region" description="Polar residues" evidence="5">
    <location>
        <begin position="1"/>
        <end position="13"/>
    </location>
</feature>
<feature type="binding site" evidence="3">
    <location>
        <position position="70"/>
    </location>
    <ligand>
        <name>ADP</name>
        <dbReference type="ChEBI" id="CHEBI:456216"/>
        <label>2</label>
    </ligand>
</feature>
<feature type="binding site" evidence="3">
    <location>
        <position position="70"/>
    </location>
    <ligand>
        <name>AMP</name>
        <dbReference type="ChEBI" id="CHEBI:456215"/>
        <label>2</label>
    </ligand>
</feature>
<feature type="binding site" evidence="3">
    <location>
        <position position="70"/>
    </location>
    <ligand>
        <name>ATP</name>
        <dbReference type="ChEBI" id="CHEBI:30616"/>
        <label>1</label>
    </ligand>
</feature>
<feature type="binding site" evidence="3">
    <location>
        <position position="70"/>
    </location>
    <ligand>
        <name>ATP</name>
        <dbReference type="ChEBI" id="CHEBI:30616"/>
        <label>2</label>
    </ligand>
</feature>
<feature type="binding site" evidence="3">
    <location>
        <begin position="85"/>
        <end position="90"/>
    </location>
    <ligand>
        <name>ADP</name>
        <dbReference type="ChEBI" id="CHEBI:456216"/>
        <label>1</label>
    </ligand>
</feature>
<feature type="binding site" evidence="3">
    <location>
        <begin position="85"/>
        <end position="90"/>
    </location>
    <ligand>
        <name>AMP</name>
        <dbReference type="ChEBI" id="CHEBI:456215"/>
        <label>1</label>
    </ligand>
</feature>
<feature type="binding site" evidence="3">
    <location>
        <begin position="85"/>
        <end position="90"/>
    </location>
    <ligand>
        <name>ATP</name>
        <dbReference type="ChEBI" id="CHEBI:30616"/>
        <label>1</label>
    </ligand>
</feature>
<feature type="binding site" evidence="3">
    <location>
        <position position="130"/>
    </location>
    <ligand>
        <name>ADP</name>
        <dbReference type="ChEBI" id="CHEBI:456216"/>
        <label>1</label>
    </ligand>
</feature>
<feature type="binding site" evidence="3">
    <location>
        <position position="130"/>
    </location>
    <ligand>
        <name>AMP</name>
        <dbReference type="ChEBI" id="CHEBI:456215"/>
        <label>1</label>
    </ligand>
</feature>
<feature type="binding site" evidence="3">
    <location>
        <position position="130"/>
    </location>
    <ligand>
        <name>ATP</name>
        <dbReference type="ChEBI" id="CHEBI:30616"/>
        <label>1</label>
    </ligand>
</feature>
<feature type="binding site" evidence="3">
    <location>
        <begin position="151"/>
        <end position="152"/>
    </location>
    <ligand>
        <name>ADP</name>
        <dbReference type="ChEBI" id="CHEBI:456216"/>
        <label>1</label>
    </ligand>
</feature>
<feature type="binding site" evidence="3">
    <location>
        <begin position="151"/>
        <end position="152"/>
    </location>
    <ligand>
        <name>AMP</name>
        <dbReference type="ChEBI" id="CHEBI:456215"/>
        <label>1</label>
    </ligand>
</feature>
<feature type="binding site" evidence="3">
    <location>
        <begin position="151"/>
        <end position="152"/>
    </location>
    <ligand>
        <name>ATP</name>
        <dbReference type="ChEBI" id="CHEBI:30616"/>
        <label>1</label>
    </ligand>
</feature>
<feature type="binding site" evidence="3">
    <location>
        <position position="151"/>
    </location>
    <ligand>
        <name>AMP</name>
        <dbReference type="ChEBI" id="CHEBI:456215"/>
        <label>3</label>
    </ligand>
</feature>
<feature type="binding site" evidence="3">
    <location>
        <position position="152"/>
    </location>
    <ligand>
        <name>ATP</name>
        <dbReference type="ChEBI" id="CHEBI:30616"/>
        <label>2</label>
    </ligand>
</feature>
<feature type="binding site" evidence="3">
    <location>
        <position position="170"/>
    </location>
    <ligand>
        <name>ADP</name>
        <dbReference type="ChEBI" id="CHEBI:456216"/>
        <label>2</label>
    </ligand>
</feature>
<feature type="binding site" evidence="3">
    <location>
        <position position="170"/>
    </location>
    <ligand>
        <name>AMP</name>
        <dbReference type="ChEBI" id="CHEBI:456215"/>
        <label>2</label>
    </ligand>
</feature>
<feature type="binding site" evidence="3">
    <location>
        <position position="170"/>
    </location>
    <ligand>
        <name>ATP</name>
        <dbReference type="ChEBI" id="CHEBI:30616"/>
        <label>2</label>
    </ligand>
</feature>
<feature type="binding site" evidence="3">
    <location>
        <position position="200"/>
    </location>
    <ligand>
        <name>AMP</name>
        <dbReference type="ChEBI" id="CHEBI:456215"/>
        <label>3</label>
    </ligand>
</feature>
<feature type="binding site" evidence="3">
    <location>
        <position position="205"/>
    </location>
    <ligand>
        <name>AMP</name>
        <dbReference type="ChEBI" id="CHEBI:456215"/>
        <label>3</label>
    </ligand>
</feature>
<feature type="binding site" evidence="3">
    <location>
        <begin position="226"/>
        <end position="227"/>
    </location>
    <ligand>
        <name>AMP</name>
        <dbReference type="ChEBI" id="CHEBI:456215"/>
        <label>3</label>
    </ligand>
</feature>
<feature type="binding site" evidence="3">
    <location>
        <begin position="242"/>
        <end position="245"/>
    </location>
    <ligand>
        <name>ADP</name>
        <dbReference type="ChEBI" id="CHEBI:456216"/>
        <label>2</label>
    </ligand>
</feature>
<feature type="binding site" evidence="3">
    <location>
        <begin position="242"/>
        <end position="245"/>
    </location>
    <ligand>
        <name>AMP</name>
        <dbReference type="ChEBI" id="CHEBI:456215"/>
        <label>2</label>
    </ligand>
</feature>
<feature type="binding site" evidence="3">
    <location>
        <begin position="242"/>
        <end position="245"/>
    </location>
    <ligand>
        <name>ATP</name>
        <dbReference type="ChEBI" id="CHEBI:30616"/>
        <label>2</label>
    </ligand>
</feature>
<feature type="binding site" evidence="3">
    <location>
        <position position="269"/>
    </location>
    <ligand>
        <name>ADP</name>
        <dbReference type="ChEBI" id="CHEBI:456216"/>
        <label>2</label>
    </ligand>
</feature>
<feature type="binding site" evidence="3">
    <location>
        <position position="269"/>
    </location>
    <ligand>
        <name>AMP</name>
        <dbReference type="ChEBI" id="CHEBI:456215"/>
        <label>2</label>
    </ligand>
</feature>
<feature type="binding site" evidence="3">
    <location>
        <position position="269"/>
    </location>
    <ligand>
        <name>ATP</name>
        <dbReference type="ChEBI" id="CHEBI:30616"/>
        <label>2</label>
    </ligand>
</feature>
<feature type="binding site" evidence="3">
    <location>
        <position position="277"/>
    </location>
    <ligand>
        <name>ADP</name>
        <dbReference type="ChEBI" id="CHEBI:456216"/>
        <label>2</label>
    </ligand>
</feature>
<feature type="binding site" evidence="3">
    <location>
        <position position="277"/>
    </location>
    <ligand>
        <name>AMP</name>
        <dbReference type="ChEBI" id="CHEBI:456215"/>
        <label>2</label>
    </ligand>
</feature>
<feature type="binding site" evidence="3">
    <location>
        <position position="277"/>
    </location>
    <ligand>
        <name>ATP</name>
        <dbReference type="ChEBI" id="CHEBI:30616"/>
        <label>2</label>
    </ligand>
</feature>
<feature type="binding site" evidence="3">
    <location>
        <begin position="298"/>
        <end position="299"/>
    </location>
    <ligand>
        <name>ADP</name>
        <dbReference type="ChEBI" id="CHEBI:456216"/>
        <label>2</label>
    </ligand>
</feature>
<feature type="binding site" evidence="3">
    <location>
        <begin position="298"/>
        <end position="299"/>
    </location>
    <ligand>
        <name>AMP</name>
        <dbReference type="ChEBI" id="CHEBI:456215"/>
        <label>2</label>
    </ligand>
</feature>
<feature type="binding site" evidence="3">
    <location>
        <begin position="298"/>
        <end position="299"/>
    </location>
    <ligand>
        <name>ATP</name>
        <dbReference type="ChEBI" id="CHEBI:30616"/>
        <label>2</label>
    </ligand>
</feature>
<feature type="binding site" evidence="3">
    <location>
        <position position="298"/>
    </location>
    <ligand>
        <name>AMP</name>
        <dbReference type="ChEBI" id="CHEBI:456215"/>
        <label>3</label>
    </ligand>
</feature>
<feature type="binding site" evidence="3">
    <location>
        <begin position="314"/>
        <end position="317"/>
    </location>
    <ligand>
        <name>AMP</name>
        <dbReference type="ChEBI" id="CHEBI:456215"/>
        <label>3</label>
    </ligand>
</feature>
<feature type="modified residue" description="Phosphoserine; by ULK1" evidence="3">
    <location>
        <position position="261"/>
    </location>
</feature>
<feature type="modified residue" description="Phosphothreonine; by ULK1" evidence="3">
    <location>
        <position position="263"/>
    </location>
</feature>
<feature type="modified residue" description="Phosphoserine; by ULK1" evidence="3">
    <location>
        <position position="270"/>
    </location>
</feature>
<evidence type="ECO:0000250" key="1"/>
<evidence type="ECO:0000250" key="2">
    <source>
        <dbReference type="UniProtKB" id="P54619"/>
    </source>
</evidence>
<evidence type="ECO:0000250" key="3">
    <source>
        <dbReference type="UniProtKB" id="P80385"/>
    </source>
</evidence>
<evidence type="ECO:0000255" key="4">
    <source>
        <dbReference type="PROSITE-ProRule" id="PRU00703"/>
    </source>
</evidence>
<evidence type="ECO:0000256" key="5">
    <source>
        <dbReference type="SAM" id="MobiDB-lite"/>
    </source>
</evidence>
<evidence type="ECO:0000305" key="6"/>
<gene>
    <name type="primary">PRKAG1</name>
</gene>
<reference key="1">
    <citation type="journal article" date="2004" name="Anim. Genet.">
        <title>Determination of PRKAG1 coding sequence and mapping of PRKAG1 and PRKAG2 relatively to porcine back fat thickness QTL.</title>
        <authorList>
            <person name="Demeure O."/>
            <person name="Liaubet L."/>
            <person name="Riquet J."/>
            <person name="Milan D."/>
        </authorList>
    </citation>
    <scope>NUCLEOTIDE SEQUENCE [MRNA]</scope>
</reference>
<reference key="2">
    <citation type="journal article" date="1994" name="J. Biol. Chem.">
        <title>Mammalian 5'-AMP-activated protein kinase non-catalytic subunits are homologs of proteins that interact with yeast Snf1 protein kinase.</title>
        <authorList>
            <person name="Stapleton D."/>
            <person name="Gao G."/>
            <person name="Michell B.J."/>
            <person name="Widmer J."/>
            <person name="Mitchelhill K.I."/>
            <person name="Teh T."/>
            <person name="House C.M."/>
            <person name="Witters L.A."/>
            <person name="Kemp B.E."/>
        </authorList>
    </citation>
    <scope>PROTEIN SEQUENCE OF 48-58; 101-113; 153-169; 177-208; 225-231; 240-253 AND 300-329</scope>
    <source>
        <tissue>Liver</tissue>
    </source>
</reference>
<organism>
    <name type="scientific">Sus scrofa</name>
    <name type="common">Pig</name>
    <dbReference type="NCBI Taxonomy" id="9823"/>
    <lineage>
        <taxon>Eukaryota</taxon>
        <taxon>Metazoa</taxon>
        <taxon>Chordata</taxon>
        <taxon>Craniata</taxon>
        <taxon>Vertebrata</taxon>
        <taxon>Euteleostomi</taxon>
        <taxon>Mammalia</taxon>
        <taxon>Eutheria</taxon>
        <taxon>Laurasiatheria</taxon>
        <taxon>Artiodactyla</taxon>
        <taxon>Suina</taxon>
        <taxon>Suidae</taxon>
        <taxon>Sus</taxon>
    </lineage>
</organism>
<protein>
    <recommendedName>
        <fullName>5'-AMP-activated protein kinase subunit gamma-1</fullName>
        <shortName>AMPK gamma1</shortName>
        <shortName>AMPK subunit gamma-1</shortName>
        <shortName>AMPKg</shortName>
    </recommendedName>
    <alternativeName>
        <fullName>38 kDa subunit</fullName>
    </alternativeName>
</protein>
<comment type="function">
    <text evidence="2">AMP/ATP-binding subunit of AMP-activated protein kinase (AMPK), an energy sensor protein kinase that plays a key role in regulating cellular energy metabolism. In response to reduction of intracellular ATP levels, AMPK activates energy-producing pathways and inhibits energy-consuming processes: inhibits protein, carbohydrate and lipid biosynthesis, as well as cell growth and proliferation. AMPK acts via direct phosphorylation of metabolic enzymes, and by longer-term effects via phosphorylation of transcription regulators. Also acts as a regulator of cellular polarity by remodeling the actin cytoskeleton; probably by indirectly activating myosin. Gamma non-catalytic subunit mediates binding to AMP, ADP and ATP, leading to activate or inhibit AMPK: AMP-binding results in allosteric activation of alpha catalytic subunit (PRKAA1 or PRKAA2) both by inducing phosphorylation and preventing dephosphorylation of catalytic subunits. ADP also stimulates phosphorylation, without stimulating already phosphorylated catalytic subunit. ATP promotes dephosphorylation of catalytic subunit, rendering the AMPK enzyme inactive.</text>
</comment>
<comment type="subunit">
    <text evidence="2">AMPK is a heterotrimer of an alpha catalytic subunit (PRKAA1 or PRKAA2), a beta (PRKAB1 or PRKAB2) and a gamma non-catalytic subunits (PRKAG1, PRKAG2 or PRKAG3). Interacts with FNIP1 and FNIP2.</text>
</comment>
<comment type="domain">
    <text evidence="1">The AMPK pseudosubstrate motif resembles the sequence around sites phosphorylated on target proteins of AMPK, except the presence of a non-phosphorylatable residue in place of Ser. In the absence of AMP this pseudosubstrate sequence may bind to the active site groove on the alpha subunit (PRKAA1 or PRKAA2), preventing phosphorylation by the upstream activating kinase STK11/LKB1 (By similarity).</text>
</comment>
<comment type="domain">
    <text evidence="3">The 4 CBS domains mediate binding to nucleotides. Of the 4 potential nucleotide-binding sites, 3 are occupied, designated as sites 1, 3, and 4 based on the CBS modules that provide the acidic residue for coordination with the 2'- and 3'-hydroxyl groups of the ribose of AMP. Of these, site 4 appears to be a structural site that retains a tightly held AMP molecule (AMP 3). The 2 remaining sites, 1 and 3, can bind either AMP, ADP or ATP. Site 1 (AMP, ADP or ATP 1) is the high-affinity binding site and likely accommodates AMP or ADP. Site 3 (AMP, ADP or ATP 2) is the weakest nucleotide-binding site on the gamma subunit, yet it is exquisitely sensitive to changes in nucleotide levels and this allows AMPK to respond rapidly to changes in cellular energy status. Site 3 is likely to be responsible for protection of a conserved threonine in the activation loop of the alpha catalytic subunit through conformational changes induced by binding of AMP or ADP.</text>
</comment>
<comment type="PTM">
    <text evidence="1">Phosphorylated by ULK1 and ULK2; leading to negatively regulate AMPK activity and suggesting the existence of a regulatory feedback loop between ULK1, ULK2 and AMPK.</text>
</comment>
<comment type="PTM">
    <text evidence="2">Glycosylated; O-GlcNAcylated by OGT, promoting the AMP-activated protein kinase (AMPK) activity.</text>
</comment>
<comment type="similarity">
    <text evidence="6">Belongs to the 5'-AMP-activated protein kinase gamma subunit family.</text>
</comment>
<accession>Q09138</accession>
<accession>Q6X275</accession>
<proteinExistence type="evidence at protein level"/>
<sequence length="330" mass="37415">METVTSSDSSSAVENEHPQDTPESNNSVYTSFMKSHRCYDLIPTSSKLVVFDTSLQVKKAFFALVTNGVRAAPLWDSKKQSFVGMLTITDFINILHRYYKSALVQIYELEEHKIETWREVYLQDSFKPLVCISPNASLFDAVSSLIRNKIHRLPVIDPESGNTLYILTHKRILKFLKLFITEFPKPEFMSKSLEELQIGTYANIAMVRTTTPVYVALGIFVQHRVSALPVVDEKGRVVDIYSKFDVINLAAEKTYNNLDVSVTKALQHRSHYFEGVLKCYLHETLETIINRLVEAEVHRLVVVDENDVVKGIVSLSDILQALVLTGGEKP</sequence>
<name>AAKG1_PIG</name>
<dbReference type="EMBL" id="AY260940">
    <property type="protein sequence ID" value="AAP86632.1"/>
    <property type="molecule type" value="mRNA"/>
</dbReference>
<dbReference type="RefSeq" id="NP_001001642.1">
    <property type="nucleotide sequence ID" value="NM_001001642.2"/>
</dbReference>
<dbReference type="SMR" id="Q09138"/>
<dbReference type="FunCoup" id="Q09138">
    <property type="interactions" value="1835"/>
</dbReference>
<dbReference type="STRING" id="9823.ENSSSCP00000000193"/>
<dbReference type="PaxDb" id="9823-ENSSSCP00000000193"/>
<dbReference type="PeptideAtlas" id="Q09138"/>
<dbReference type="Ensembl" id="ENSSSCT00115026688">
    <property type="protein sequence ID" value="ENSSSCP00115025293"/>
    <property type="gene ID" value="ENSSSCG00115015289"/>
</dbReference>
<dbReference type="GeneID" id="414426"/>
<dbReference type="KEGG" id="ssc:414426"/>
<dbReference type="CTD" id="5571"/>
<dbReference type="eggNOG" id="KOG1764">
    <property type="taxonomic scope" value="Eukaryota"/>
</dbReference>
<dbReference type="HOGENOM" id="CLU_021740_3_0_1"/>
<dbReference type="InParanoid" id="Q09138"/>
<dbReference type="OMA" id="TASIHPF"/>
<dbReference type="OrthoDB" id="449052at2759"/>
<dbReference type="Reactome" id="R-SSC-1632852">
    <property type="pathway name" value="Macroautophagy"/>
</dbReference>
<dbReference type="Reactome" id="R-SSC-380972">
    <property type="pathway name" value="Energy dependent regulation of mTOR by LKB1-AMPK"/>
</dbReference>
<dbReference type="Reactome" id="R-SSC-5628897">
    <property type="pathway name" value="TP53 Regulates Metabolic Genes"/>
</dbReference>
<dbReference type="Reactome" id="R-SSC-6804756">
    <property type="pathway name" value="Regulation of TP53 Activity through Phosphorylation"/>
</dbReference>
<dbReference type="Proteomes" id="UP000008227">
    <property type="component" value="Unplaced"/>
</dbReference>
<dbReference type="Proteomes" id="UP000314985">
    <property type="component" value="Unplaced"/>
</dbReference>
<dbReference type="Proteomes" id="UP000694570">
    <property type="component" value="Unplaced"/>
</dbReference>
<dbReference type="Proteomes" id="UP000694571">
    <property type="component" value="Unplaced"/>
</dbReference>
<dbReference type="Proteomes" id="UP000694720">
    <property type="component" value="Unplaced"/>
</dbReference>
<dbReference type="Proteomes" id="UP000694722">
    <property type="component" value="Unplaced"/>
</dbReference>
<dbReference type="Proteomes" id="UP000694723">
    <property type="component" value="Unplaced"/>
</dbReference>
<dbReference type="Proteomes" id="UP000694724">
    <property type="component" value="Unplaced"/>
</dbReference>
<dbReference type="Proteomes" id="UP000694725">
    <property type="component" value="Unplaced"/>
</dbReference>
<dbReference type="Proteomes" id="UP000694726">
    <property type="component" value="Unplaced"/>
</dbReference>
<dbReference type="Proteomes" id="UP000694727">
    <property type="component" value="Unplaced"/>
</dbReference>
<dbReference type="Proteomes" id="UP000694728">
    <property type="component" value="Unplaced"/>
</dbReference>
<dbReference type="GO" id="GO:0005737">
    <property type="term" value="C:cytoplasm"/>
    <property type="evidence" value="ECO:0000318"/>
    <property type="project" value="GO_Central"/>
</dbReference>
<dbReference type="GO" id="GO:0005829">
    <property type="term" value="C:cytosol"/>
    <property type="evidence" value="ECO:0007669"/>
    <property type="project" value="UniProtKB-ARBA"/>
</dbReference>
<dbReference type="GO" id="GO:0031588">
    <property type="term" value="C:nucleotide-activated protein kinase complex"/>
    <property type="evidence" value="ECO:0000250"/>
    <property type="project" value="UniProtKB"/>
</dbReference>
<dbReference type="GO" id="GO:0005634">
    <property type="term" value="C:nucleus"/>
    <property type="evidence" value="ECO:0000318"/>
    <property type="project" value="GO_Central"/>
</dbReference>
<dbReference type="GO" id="GO:0043531">
    <property type="term" value="F:ADP binding"/>
    <property type="evidence" value="ECO:0000250"/>
    <property type="project" value="UniProtKB"/>
</dbReference>
<dbReference type="GO" id="GO:0016208">
    <property type="term" value="F:AMP binding"/>
    <property type="evidence" value="ECO:0000250"/>
    <property type="project" value="UniProtKB"/>
</dbReference>
<dbReference type="GO" id="GO:0005524">
    <property type="term" value="F:ATP binding"/>
    <property type="evidence" value="ECO:0000250"/>
    <property type="project" value="UniProtKB"/>
</dbReference>
<dbReference type="GO" id="GO:0019901">
    <property type="term" value="F:protein kinase binding"/>
    <property type="evidence" value="ECO:0000318"/>
    <property type="project" value="GO_Central"/>
</dbReference>
<dbReference type="GO" id="GO:0019887">
    <property type="term" value="F:protein kinase regulator activity"/>
    <property type="evidence" value="ECO:0000250"/>
    <property type="project" value="UniProtKB"/>
</dbReference>
<dbReference type="GO" id="GO:0042149">
    <property type="term" value="P:cellular response to glucose starvation"/>
    <property type="evidence" value="ECO:0000318"/>
    <property type="project" value="GO_Central"/>
</dbReference>
<dbReference type="GO" id="GO:0006633">
    <property type="term" value="P:fatty acid biosynthetic process"/>
    <property type="evidence" value="ECO:0007669"/>
    <property type="project" value="UniProtKB-KW"/>
</dbReference>
<dbReference type="GO" id="GO:0045722">
    <property type="term" value="P:positive regulation of gluconeogenesis"/>
    <property type="evidence" value="ECO:0000318"/>
    <property type="project" value="GO_Central"/>
</dbReference>
<dbReference type="GO" id="GO:0043609">
    <property type="term" value="P:regulation of carbon utilization"/>
    <property type="evidence" value="ECO:0000318"/>
    <property type="project" value="GO_Central"/>
</dbReference>
<dbReference type="GO" id="GO:0006110">
    <property type="term" value="P:regulation of glycolytic process"/>
    <property type="evidence" value="ECO:0000318"/>
    <property type="project" value="GO_Central"/>
</dbReference>
<dbReference type="CDD" id="cd04618">
    <property type="entry name" value="CBS_euAMPK_gamma-like_repeat1"/>
    <property type="match status" value="1"/>
</dbReference>
<dbReference type="CDD" id="cd04641">
    <property type="entry name" value="CBS_euAMPK_gamma-like_repeat2"/>
    <property type="match status" value="1"/>
</dbReference>
<dbReference type="FunFam" id="3.10.580.10:FF:000003">
    <property type="entry name" value="Protein kinase AMP-activated non-catalytic subunit gamma 1"/>
    <property type="match status" value="1"/>
</dbReference>
<dbReference type="FunFam" id="3.10.580.10:FF:000004">
    <property type="entry name" value="Protein kinase AMP-activated non-catalytic subunit gamma 2"/>
    <property type="match status" value="1"/>
</dbReference>
<dbReference type="Gene3D" id="3.10.580.10">
    <property type="entry name" value="CBS-domain"/>
    <property type="match status" value="2"/>
</dbReference>
<dbReference type="InterPro" id="IPR050511">
    <property type="entry name" value="AMPK_gamma/SDS23_families"/>
</dbReference>
<dbReference type="InterPro" id="IPR000644">
    <property type="entry name" value="CBS_dom"/>
</dbReference>
<dbReference type="InterPro" id="IPR046342">
    <property type="entry name" value="CBS_dom_sf"/>
</dbReference>
<dbReference type="PANTHER" id="PTHR13780:SF38">
    <property type="entry name" value="5'-AMP-ACTIVATED PROTEIN KINASE SUBUNIT GAMMA-1"/>
    <property type="match status" value="1"/>
</dbReference>
<dbReference type="PANTHER" id="PTHR13780">
    <property type="entry name" value="AMP-ACTIVATED PROTEIN KINASE, GAMMA REGULATORY SUBUNIT"/>
    <property type="match status" value="1"/>
</dbReference>
<dbReference type="Pfam" id="PF00571">
    <property type="entry name" value="CBS"/>
    <property type="match status" value="4"/>
</dbReference>
<dbReference type="SMART" id="SM00116">
    <property type="entry name" value="CBS"/>
    <property type="match status" value="4"/>
</dbReference>
<dbReference type="SUPFAM" id="SSF54631">
    <property type="entry name" value="CBS-domain pair"/>
    <property type="match status" value="2"/>
</dbReference>
<dbReference type="PROSITE" id="PS51371">
    <property type="entry name" value="CBS"/>
    <property type="match status" value="4"/>
</dbReference>